<reference key="1">
    <citation type="journal article" date="1991" name="J. Cell Biol.">
        <title>Radixin is a novel member of the band 4.1 family.</title>
        <authorList>
            <person name="Funayama N."/>
            <person name="Nagafuchi A."/>
            <person name="Sato N."/>
            <person name="Tsukita S."/>
            <person name="Tsukita S."/>
        </authorList>
    </citation>
    <scope>NUCLEOTIDE SEQUENCE [MRNA]</scope>
</reference>
<reference key="2">
    <citation type="journal article" date="2005" name="Science">
        <title>The transcriptional landscape of the mammalian genome.</title>
        <authorList>
            <person name="Carninci P."/>
            <person name="Kasukawa T."/>
            <person name="Katayama S."/>
            <person name="Gough J."/>
            <person name="Frith M.C."/>
            <person name="Maeda N."/>
            <person name="Oyama R."/>
            <person name="Ravasi T."/>
            <person name="Lenhard B."/>
            <person name="Wells C."/>
            <person name="Kodzius R."/>
            <person name="Shimokawa K."/>
            <person name="Bajic V.B."/>
            <person name="Brenner S.E."/>
            <person name="Batalov S."/>
            <person name="Forrest A.R."/>
            <person name="Zavolan M."/>
            <person name="Davis M.J."/>
            <person name="Wilming L.G."/>
            <person name="Aidinis V."/>
            <person name="Allen J.E."/>
            <person name="Ambesi-Impiombato A."/>
            <person name="Apweiler R."/>
            <person name="Aturaliya R.N."/>
            <person name="Bailey T.L."/>
            <person name="Bansal M."/>
            <person name="Baxter L."/>
            <person name="Beisel K.W."/>
            <person name="Bersano T."/>
            <person name="Bono H."/>
            <person name="Chalk A.M."/>
            <person name="Chiu K.P."/>
            <person name="Choudhary V."/>
            <person name="Christoffels A."/>
            <person name="Clutterbuck D.R."/>
            <person name="Crowe M.L."/>
            <person name="Dalla E."/>
            <person name="Dalrymple B.P."/>
            <person name="de Bono B."/>
            <person name="Della Gatta G."/>
            <person name="di Bernardo D."/>
            <person name="Down T."/>
            <person name="Engstrom P."/>
            <person name="Fagiolini M."/>
            <person name="Faulkner G."/>
            <person name="Fletcher C.F."/>
            <person name="Fukushima T."/>
            <person name="Furuno M."/>
            <person name="Futaki S."/>
            <person name="Gariboldi M."/>
            <person name="Georgii-Hemming P."/>
            <person name="Gingeras T.R."/>
            <person name="Gojobori T."/>
            <person name="Green R.E."/>
            <person name="Gustincich S."/>
            <person name="Harbers M."/>
            <person name="Hayashi Y."/>
            <person name="Hensch T.K."/>
            <person name="Hirokawa N."/>
            <person name="Hill D."/>
            <person name="Huminiecki L."/>
            <person name="Iacono M."/>
            <person name="Ikeo K."/>
            <person name="Iwama A."/>
            <person name="Ishikawa T."/>
            <person name="Jakt M."/>
            <person name="Kanapin A."/>
            <person name="Katoh M."/>
            <person name="Kawasawa Y."/>
            <person name="Kelso J."/>
            <person name="Kitamura H."/>
            <person name="Kitano H."/>
            <person name="Kollias G."/>
            <person name="Krishnan S.P."/>
            <person name="Kruger A."/>
            <person name="Kummerfeld S.K."/>
            <person name="Kurochkin I.V."/>
            <person name="Lareau L.F."/>
            <person name="Lazarevic D."/>
            <person name="Lipovich L."/>
            <person name="Liu J."/>
            <person name="Liuni S."/>
            <person name="McWilliam S."/>
            <person name="Madan Babu M."/>
            <person name="Madera M."/>
            <person name="Marchionni L."/>
            <person name="Matsuda H."/>
            <person name="Matsuzawa S."/>
            <person name="Miki H."/>
            <person name="Mignone F."/>
            <person name="Miyake S."/>
            <person name="Morris K."/>
            <person name="Mottagui-Tabar S."/>
            <person name="Mulder N."/>
            <person name="Nakano N."/>
            <person name="Nakauchi H."/>
            <person name="Ng P."/>
            <person name="Nilsson R."/>
            <person name="Nishiguchi S."/>
            <person name="Nishikawa S."/>
            <person name="Nori F."/>
            <person name="Ohara O."/>
            <person name="Okazaki Y."/>
            <person name="Orlando V."/>
            <person name="Pang K.C."/>
            <person name="Pavan W.J."/>
            <person name="Pavesi G."/>
            <person name="Pesole G."/>
            <person name="Petrovsky N."/>
            <person name="Piazza S."/>
            <person name="Reed J."/>
            <person name="Reid J.F."/>
            <person name="Ring B.Z."/>
            <person name="Ringwald M."/>
            <person name="Rost B."/>
            <person name="Ruan Y."/>
            <person name="Salzberg S.L."/>
            <person name="Sandelin A."/>
            <person name="Schneider C."/>
            <person name="Schoenbach C."/>
            <person name="Sekiguchi K."/>
            <person name="Semple C.A."/>
            <person name="Seno S."/>
            <person name="Sessa L."/>
            <person name="Sheng Y."/>
            <person name="Shibata Y."/>
            <person name="Shimada H."/>
            <person name="Shimada K."/>
            <person name="Silva D."/>
            <person name="Sinclair B."/>
            <person name="Sperling S."/>
            <person name="Stupka E."/>
            <person name="Sugiura K."/>
            <person name="Sultana R."/>
            <person name="Takenaka Y."/>
            <person name="Taki K."/>
            <person name="Tammoja K."/>
            <person name="Tan S.L."/>
            <person name="Tang S."/>
            <person name="Taylor M.S."/>
            <person name="Tegner J."/>
            <person name="Teichmann S.A."/>
            <person name="Ueda H.R."/>
            <person name="van Nimwegen E."/>
            <person name="Verardo R."/>
            <person name="Wei C.L."/>
            <person name="Yagi K."/>
            <person name="Yamanishi H."/>
            <person name="Zabarovsky E."/>
            <person name="Zhu S."/>
            <person name="Zimmer A."/>
            <person name="Hide W."/>
            <person name="Bult C."/>
            <person name="Grimmond S.M."/>
            <person name="Teasdale R.D."/>
            <person name="Liu E.T."/>
            <person name="Brusic V."/>
            <person name="Quackenbush J."/>
            <person name="Wahlestedt C."/>
            <person name="Mattick J.S."/>
            <person name="Hume D.A."/>
            <person name="Kai C."/>
            <person name="Sasaki D."/>
            <person name="Tomaru Y."/>
            <person name="Fukuda S."/>
            <person name="Kanamori-Katayama M."/>
            <person name="Suzuki M."/>
            <person name="Aoki J."/>
            <person name="Arakawa T."/>
            <person name="Iida J."/>
            <person name="Imamura K."/>
            <person name="Itoh M."/>
            <person name="Kato T."/>
            <person name="Kawaji H."/>
            <person name="Kawagashira N."/>
            <person name="Kawashima T."/>
            <person name="Kojima M."/>
            <person name="Kondo S."/>
            <person name="Konno H."/>
            <person name="Nakano K."/>
            <person name="Ninomiya N."/>
            <person name="Nishio T."/>
            <person name="Okada M."/>
            <person name="Plessy C."/>
            <person name="Shibata K."/>
            <person name="Shiraki T."/>
            <person name="Suzuki S."/>
            <person name="Tagami M."/>
            <person name="Waki K."/>
            <person name="Watahiki A."/>
            <person name="Okamura-Oho Y."/>
            <person name="Suzuki H."/>
            <person name="Kawai J."/>
            <person name="Hayashizaki Y."/>
        </authorList>
    </citation>
    <scope>NUCLEOTIDE SEQUENCE [LARGE SCALE MRNA]</scope>
    <source>
        <strain>C57BL/6J</strain>
        <tissue>Kidney</tissue>
    </source>
</reference>
<reference key="3">
    <citation type="journal article" date="2004" name="Genome Res.">
        <title>The status, quality, and expansion of the NIH full-length cDNA project: the Mammalian Gene Collection (MGC).</title>
        <authorList>
            <consortium name="The MGC Project Team"/>
        </authorList>
    </citation>
    <scope>NUCLEOTIDE SEQUENCE [LARGE SCALE MRNA]</scope>
    <source>
        <strain>C57BL/6J</strain>
        <tissue>Brain</tissue>
    </source>
</reference>
<reference key="4">
    <citation type="submission" date="2007-03" db="UniProtKB">
        <authorList>
            <person name="Lubec G."/>
            <person name="Klug S."/>
        </authorList>
    </citation>
    <scope>PROTEIN SEQUENCE OF 264-273</scope>
    <scope>IDENTIFICATION BY MASS SPECTROMETRY</scope>
    <source>
        <tissue>Hippocampus</tissue>
    </source>
</reference>
<reference key="5">
    <citation type="journal article" date="1998" name="J. Cell Biol.">
        <title>Rho-kinase phosphorylates COOH-terminal threonines of ezrin/radixin/moesin (ERM) proteins and regulates their head-to-tail association.</title>
        <authorList>
            <person name="Matsui T."/>
            <person name="Maeda M."/>
            <person name="Doi Y."/>
            <person name="Yonemura S."/>
            <person name="Amano M."/>
            <person name="Kaibuchi K."/>
            <person name="Tsukita S."/>
            <person name="Tsukita S."/>
        </authorList>
    </citation>
    <scope>PHOSPHORYLATION AT THR-567</scope>
    <scope>ACTIVITY REGULATION</scope>
</reference>
<reference key="6">
    <citation type="journal article" date="1998" name="J. Cell Biol.">
        <title>Ezrin/radixin/moesin (ERM) proteins bind to a positively charged amino acid cluster in the juxta-membrane cytoplasmic domain of CD44, CD43, and ICAM-2.</title>
        <authorList>
            <person name="Yonemura S."/>
            <person name="Hirao M."/>
            <person name="Doi Y."/>
            <person name="Takahashi N."/>
            <person name="Kondo T."/>
            <person name="Tsukita S."/>
            <person name="Tsukita S."/>
        </authorList>
    </citation>
    <scope>INTERACTION WITH SPN/CD43 CYTOPLASMIC TAIL; CD44 AND ICAM2</scope>
    <scope>SUBCELLULAR LOCATION</scope>
</reference>
<reference key="7">
    <citation type="journal article" date="2005" name="Mol. Cell. Neurosci.">
        <title>Characterization of the NF2 protein merlin and the ERM protein ezrin in human, rat, and mouse central nervous system.</title>
        <authorList>
            <person name="Groenholm M."/>
            <person name="Teesalu T."/>
            <person name="Tyynelaa J."/>
            <person name="Piltti K."/>
            <person name="Boehling T."/>
            <person name="Wartiovaara K."/>
            <person name="Vaheri A."/>
            <person name="Carpen O."/>
        </authorList>
    </citation>
    <scope>TISSUE SPECIFICITY</scope>
    <scope>DEVELOPMENTAL STAGE</scope>
</reference>
<reference key="8">
    <citation type="journal article" date="2010" name="Cell">
        <title>A tissue-specific atlas of mouse protein phosphorylation and expression.</title>
        <authorList>
            <person name="Huttlin E.L."/>
            <person name="Jedrychowski M.P."/>
            <person name="Elias J.E."/>
            <person name="Goswami T."/>
            <person name="Rad R."/>
            <person name="Beausoleil S.A."/>
            <person name="Villen J."/>
            <person name="Haas W."/>
            <person name="Sowa M.E."/>
            <person name="Gygi S.P."/>
        </authorList>
    </citation>
    <scope>PHOSPHORYLATION [LARGE SCALE ANALYSIS] AT SER-535</scope>
    <scope>IDENTIFICATION BY MASS SPECTROMETRY [LARGE SCALE ANALYSIS]</scope>
    <source>
        <tissue>Brain</tissue>
        <tissue>Brown adipose tissue</tissue>
        <tissue>Heart</tissue>
        <tissue>Kidney</tissue>
        <tissue>Liver</tissue>
        <tissue>Lung</tissue>
        <tissue>Pancreas</tissue>
        <tissue>Spleen</tissue>
        <tissue>Testis</tissue>
    </source>
</reference>
<reference key="9">
    <citation type="journal article" date="2011" name="Dev. Biol.">
        <title>Periaxin is required for hexagonal geometry and membrane organization of mature lens fibers.</title>
        <authorList>
            <person name="Maddala R."/>
            <person name="Skiba N.P."/>
            <person name="Lalane R. III"/>
            <person name="Sherman D.L."/>
            <person name="Brophy P.J."/>
            <person name="Rao P.V."/>
        </authorList>
    </citation>
    <scope>IDENTIFICATION IN A COMPLEX WITH PRX; AHNAK; BFSP1; BFSP2; ANK2; PLEC; VIM AND SPECTRIN</scope>
    <scope>TISSUE SPECIFICITY</scope>
</reference>
<reference key="10">
    <citation type="journal article" date="2011" name="Mol. Biol. Cell">
        <title>CD43 interaction with ezrin-radixin-moesin (ERM) proteins regulates T-cell trafficking and CD43 phosphorylation.</title>
        <authorList>
            <person name="Cannon J.L."/>
            <person name="Mody P.D."/>
            <person name="Blaine K.M."/>
            <person name="Chen E.J."/>
            <person name="Nelson A.D."/>
            <person name="Sayles L.J."/>
            <person name="Moore T.V."/>
            <person name="Clay B.S."/>
            <person name="Dulin N.O."/>
            <person name="Shilling R.A."/>
            <person name="Burkhardt J.K."/>
            <person name="Sperling A.I."/>
        </authorList>
    </citation>
    <scope>INTERACTION WITH SPN/CD43 CYTOPLASMIC TAIL</scope>
</reference>
<reference key="11">
    <citation type="journal article" date="2014" name="Cytoskeleton">
        <title>CLIC5 stabilizes membrane-actin filament linkages at the base of hair cell stereocilia in a molecular complex with radixin, taperin, and myosin VI.</title>
        <authorList>
            <person name="Salles F.T."/>
            <person name="Andrade L.R."/>
            <person name="Tanda S."/>
            <person name="Grati M."/>
            <person name="Plona K.L."/>
            <person name="Gagnon L.H."/>
            <person name="Johnson K.R."/>
            <person name="Kachar B."/>
            <person name="Berryman M.A."/>
        </authorList>
    </citation>
    <scope>INTERACTION WITH CLIC5</scope>
</reference>
<gene>
    <name type="primary">Ezr</name>
    <name type="synonym">Vil2</name>
</gene>
<name>EZRI_MOUSE</name>
<organism>
    <name type="scientific">Mus musculus</name>
    <name type="common">Mouse</name>
    <dbReference type="NCBI Taxonomy" id="10090"/>
    <lineage>
        <taxon>Eukaryota</taxon>
        <taxon>Metazoa</taxon>
        <taxon>Chordata</taxon>
        <taxon>Craniata</taxon>
        <taxon>Vertebrata</taxon>
        <taxon>Euteleostomi</taxon>
        <taxon>Mammalia</taxon>
        <taxon>Eutheria</taxon>
        <taxon>Euarchontoglires</taxon>
        <taxon>Glires</taxon>
        <taxon>Rodentia</taxon>
        <taxon>Myomorpha</taxon>
        <taxon>Muroidea</taxon>
        <taxon>Muridae</taxon>
        <taxon>Murinae</taxon>
        <taxon>Mus</taxon>
        <taxon>Mus</taxon>
    </lineage>
</organism>
<evidence type="ECO:0000250" key="1"/>
<evidence type="ECO:0000250" key="2">
    <source>
        <dbReference type="UniProtKB" id="P15311"/>
    </source>
</evidence>
<evidence type="ECO:0000250" key="3">
    <source>
        <dbReference type="UniProtKB" id="P31976"/>
    </source>
</evidence>
<evidence type="ECO:0000250" key="4">
    <source>
        <dbReference type="UniProtKB" id="P31977"/>
    </source>
</evidence>
<evidence type="ECO:0000250" key="5">
    <source>
        <dbReference type="UniProtKB" id="Q8HZQ5"/>
    </source>
</evidence>
<evidence type="ECO:0000255" key="6"/>
<evidence type="ECO:0000255" key="7">
    <source>
        <dbReference type="PROSITE-ProRule" id="PRU00084"/>
    </source>
</evidence>
<evidence type="ECO:0000256" key="8">
    <source>
        <dbReference type="SAM" id="MobiDB-lite"/>
    </source>
</evidence>
<evidence type="ECO:0000269" key="9">
    <source>
    </source>
</evidence>
<evidence type="ECO:0000269" key="10">
    <source>
    </source>
</evidence>
<evidence type="ECO:0000269" key="11">
    <source>
    </source>
</evidence>
<evidence type="ECO:0000269" key="12">
    <source>
    </source>
</evidence>
<evidence type="ECO:0000269" key="13">
    <source>
    </source>
</evidence>
<evidence type="ECO:0000269" key="14">
    <source>
    </source>
</evidence>
<evidence type="ECO:0000305" key="15"/>
<evidence type="ECO:0000305" key="16">
    <source>
    </source>
</evidence>
<evidence type="ECO:0007744" key="17">
    <source>
    </source>
</evidence>
<keyword id="KW-0007">Acetylation</keyword>
<keyword id="KW-1003">Cell membrane</keyword>
<keyword id="KW-0966">Cell projection</keyword>
<keyword id="KW-0133">Cell shape</keyword>
<keyword id="KW-0175">Coiled coil</keyword>
<keyword id="KW-0963">Cytoplasm</keyword>
<keyword id="KW-0206">Cytoskeleton</keyword>
<keyword id="KW-0903">Direct protein sequencing</keyword>
<keyword id="KW-0472">Membrane</keyword>
<keyword id="KW-0597">Phosphoprotein</keyword>
<keyword id="KW-1185">Reference proteome</keyword>
<keyword id="KW-0702">S-nitrosylation</keyword>
<protein>
    <recommendedName>
        <fullName>Ezrin</fullName>
    </recommendedName>
    <alternativeName>
        <fullName>Cytovillin</fullName>
    </alternativeName>
    <alternativeName>
        <fullName>Villin-2</fullName>
    </alternativeName>
    <alternativeName>
        <fullName>p81</fullName>
    </alternativeName>
</protein>
<sequence length="586" mass="69407">MPKPINVRVTTMDAELEFAIQPNTTGKQLFDQVVKTIGLREVWYFGLQYVDNKGFPTWLKLDKKVSAQEVRKENPVQFKFRAKFYPEDVAEELIQDITQKLFFLQVKDGILSDEIYCPPETAVLLGSYAVQAKFGDYNKEMHKSGYLSSERLIPQRVMDQHKLSRDQWEDRIQVWHAEHRGMLKDSAMLEYLKIAQDLEMYGINYFEIKNKKGTDLWLGVDALGLNIYEKDDKLTPKIGFPWSEIRNISFNDKKFVIKPIDKKAPDFVFYAPRLRINKRILQLCMGNHELYMRRRKPDTIEVQQMKAQAREEKHQKQLERQQLETEKKRRETVEREKEQMLREKEELMLRLQDYEQKTKRAEKELSEQIEKALQLEEERRRAQEEAERLEADRMAALRAKEELERQAQDQIKSQEQLAAELAEYTAKIALLEEARRRKEDEVEEWQHRAKEAQDDLVKTKEELHLVMTAPPPPPPPVYEPVNYHVQEGLQDEGAEPMGYSAELSSEGILDDRNEEKRITEAEKNERVQRQLLTLSNELSQARDENKRTHNDIIHNENMRQGRDKYKTLRQIRQGNTKQRIDEFEAM</sequence>
<dbReference type="EMBL" id="X60671">
    <property type="protein sequence ID" value="CAA43086.1"/>
    <property type="molecule type" value="mRNA"/>
</dbReference>
<dbReference type="EMBL" id="AK002766">
    <property type="protein sequence ID" value="BAB22341.1"/>
    <property type="molecule type" value="mRNA"/>
</dbReference>
<dbReference type="EMBL" id="BC048181">
    <property type="protein sequence ID" value="AAH48181.2"/>
    <property type="molecule type" value="mRNA"/>
</dbReference>
<dbReference type="CCDS" id="CCDS37428.1"/>
<dbReference type="PIR" id="B41129">
    <property type="entry name" value="B41129"/>
</dbReference>
<dbReference type="RefSeq" id="NP_033536.2">
    <property type="nucleotide sequence ID" value="NM_009510.2"/>
</dbReference>
<dbReference type="BMRB" id="P26040"/>
<dbReference type="SMR" id="P26040"/>
<dbReference type="BioGRID" id="204522">
    <property type="interactions" value="42"/>
</dbReference>
<dbReference type="CORUM" id="P26040"/>
<dbReference type="FunCoup" id="P26040">
    <property type="interactions" value="1653"/>
</dbReference>
<dbReference type="IntAct" id="P26040">
    <property type="interactions" value="12"/>
</dbReference>
<dbReference type="MINT" id="P26040"/>
<dbReference type="STRING" id="10090.ENSMUSP00000063734"/>
<dbReference type="ChEMBL" id="CHEMBL3102687"/>
<dbReference type="TCDB" id="8.A.25.1.1">
    <property type="family name" value="the ezrin/radixin/moesin (ezrin) family"/>
</dbReference>
<dbReference type="GlyGen" id="P26040">
    <property type="glycosylation" value="1 site, 1 O-linked glycan (1 site)"/>
</dbReference>
<dbReference type="iPTMnet" id="P26040"/>
<dbReference type="PhosphoSitePlus" id="P26040"/>
<dbReference type="SwissPalm" id="P26040"/>
<dbReference type="REPRODUCTION-2DPAGE" id="P26040"/>
<dbReference type="CPTAC" id="non-CPTAC-3807"/>
<dbReference type="jPOST" id="P26040"/>
<dbReference type="PaxDb" id="10090-ENSMUSP00000063734"/>
<dbReference type="PeptideAtlas" id="P26040"/>
<dbReference type="ProteomicsDB" id="275709"/>
<dbReference type="Pumba" id="P26040"/>
<dbReference type="Antibodypedia" id="3417">
    <property type="antibodies" value="1502 antibodies from 45 providers"/>
</dbReference>
<dbReference type="DNASU" id="22350"/>
<dbReference type="Ensembl" id="ENSMUST00000064234.7">
    <property type="protein sequence ID" value="ENSMUSP00000063734.7"/>
    <property type="gene ID" value="ENSMUSG00000052397.9"/>
</dbReference>
<dbReference type="GeneID" id="22350"/>
<dbReference type="KEGG" id="mmu:22350"/>
<dbReference type="UCSC" id="uc008ahv.1">
    <property type="organism name" value="mouse"/>
</dbReference>
<dbReference type="AGR" id="MGI:98931"/>
<dbReference type="CTD" id="7430"/>
<dbReference type="MGI" id="MGI:98931">
    <property type="gene designation" value="Ezr"/>
</dbReference>
<dbReference type="VEuPathDB" id="HostDB:ENSMUSG00000052397"/>
<dbReference type="eggNOG" id="KOG3529">
    <property type="taxonomic scope" value="Eukaryota"/>
</dbReference>
<dbReference type="GeneTree" id="ENSGT01090000260082"/>
<dbReference type="HOGENOM" id="CLU_003623_6_2_1"/>
<dbReference type="InParanoid" id="P26040"/>
<dbReference type="OMA" id="MFRLHEY"/>
<dbReference type="OrthoDB" id="6018897at2759"/>
<dbReference type="PhylomeDB" id="P26040"/>
<dbReference type="TreeFam" id="TF313935"/>
<dbReference type="Reactome" id="R-MMU-373752">
    <property type="pathway name" value="Netrin-1 signaling"/>
</dbReference>
<dbReference type="Reactome" id="R-MMU-437239">
    <property type="pathway name" value="Recycling pathway of L1"/>
</dbReference>
<dbReference type="BioGRID-ORCS" id="22350">
    <property type="hits" value="2 hits in 82 CRISPR screens"/>
</dbReference>
<dbReference type="CD-CODE" id="CE726F99">
    <property type="entry name" value="Postsynaptic density"/>
</dbReference>
<dbReference type="ChiTaRS" id="Ezr">
    <property type="organism name" value="mouse"/>
</dbReference>
<dbReference type="PRO" id="PR:P26040"/>
<dbReference type="Proteomes" id="UP000000589">
    <property type="component" value="Chromosome 17"/>
</dbReference>
<dbReference type="RNAct" id="P26040">
    <property type="molecule type" value="protein"/>
</dbReference>
<dbReference type="Bgee" id="ENSMUSG00000052397">
    <property type="expression patterns" value="Expressed in epithelium of stomach and 328 other cell types or tissues"/>
</dbReference>
<dbReference type="ExpressionAtlas" id="P26040">
    <property type="expression patterns" value="baseline and differential"/>
</dbReference>
<dbReference type="GO" id="GO:0015629">
    <property type="term" value="C:actin cytoskeleton"/>
    <property type="evidence" value="ECO:0000250"/>
    <property type="project" value="UniProtKB"/>
</dbReference>
<dbReference type="GO" id="GO:0005884">
    <property type="term" value="C:actin filament"/>
    <property type="evidence" value="ECO:0000250"/>
    <property type="project" value="UniProtKB"/>
</dbReference>
<dbReference type="GO" id="GO:0045177">
    <property type="term" value="C:apical part of cell"/>
    <property type="evidence" value="ECO:0000314"/>
    <property type="project" value="MGI"/>
</dbReference>
<dbReference type="GO" id="GO:0016324">
    <property type="term" value="C:apical plasma membrane"/>
    <property type="evidence" value="ECO:0000314"/>
    <property type="project" value="MGI"/>
</dbReference>
<dbReference type="GO" id="GO:0016323">
    <property type="term" value="C:basolateral plasma membrane"/>
    <property type="evidence" value="ECO:0000250"/>
    <property type="project" value="UniProtKB"/>
</dbReference>
<dbReference type="GO" id="GO:0005903">
    <property type="term" value="C:brush border"/>
    <property type="evidence" value="ECO:0000314"/>
    <property type="project" value="UniProtKB"/>
</dbReference>
<dbReference type="GO" id="GO:0005938">
    <property type="term" value="C:cell cortex"/>
    <property type="evidence" value="ECO:0007669"/>
    <property type="project" value="UniProtKB-SubCell"/>
</dbReference>
<dbReference type="GO" id="GO:0036064">
    <property type="term" value="C:ciliary basal body"/>
    <property type="evidence" value="ECO:0000314"/>
    <property type="project" value="MGI"/>
</dbReference>
<dbReference type="GO" id="GO:0005829">
    <property type="term" value="C:cytosol"/>
    <property type="evidence" value="ECO:0000304"/>
    <property type="project" value="Reactome"/>
</dbReference>
<dbReference type="GO" id="GO:0005768">
    <property type="term" value="C:endosome"/>
    <property type="evidence" value="ECO:0007669"/>
    <property type="project" value="Ensembl"/>
</dbReference>
<dbReference type="GO" id="GO:0001650">
    <property type="term" value="C:fibrillar center"/>
    <property type="evidence" value="ECO:0007669"/>
    <property type="project" value="Ensembl"/>
</dbReference>
<dbReference type="GO" id="GO:0030175">
    <property type="term" value="C:filopodium"/>
    <property type="evidence" value="ECO:0007669"/>
    <property type="project" value="Ensembl"/>
</dbReference>
<dbReference type="GO" id="GO:0005925">
    <property type="term" value="C:focal adhesion"/>
    <property type="evidence" value="ECO:0007669"/>
    <property type="project" value="Ensembl"/>
</dbReference>
<dbReference type="GO" id="GO:0001772">
    <property type="term" value="C:immunological synapse"/>
    <property type="evidence" value="ECO:0007669"/>
    <property type="project" value="Ensembl"/>
</dbReference>
<dbReference type="GO" id="GO:0005902">
    <property type="term" value="C:microvillus"/>
    <property type="evidence" value="ECO:0000314"/>
    <property type="project" value="UniProtKB"/>
</dbReference>
<dbReference type="GO" id="GO:0031528">
    <property type="term" value="C:microvillus membrane"/>
    <property type="evidence" value="ECO:0007669"/>
    <property type="project" value="UniProtKB-SubCell"/>
</dbReference>
<dbReference type="GO" id="GO:0043209">
    <property type="term" value="C:myelin sheath"/>
    <property type="evidence" value="ECO:0007005"/>
    <property type="project" value="UniProtKB"/>
</dbReference>
<dbReference type="GO" id="GO:0048471">
    <property type="term" value="C:perinuclear region of cytoplasm"/>
    <property type="evidence" value="ECO:0007669"/>
    <property type="project" value="Ensembl"/>
</dbReference>
<dbReference type="GO" id="GO:0005886">
    <property type="term" value="C:plasma membrane"/>
    <property type="evidence" value="ECO:0000314"/>
    <property type="project" value="MGI"/>
</dbReference>
<dbReference type="GO" id="GO:0044853">
    <property type="term" value="C:plasma membrane raft"/>
    <property type="evidence" value="ECO:0007669"/>
    <property type="project" value="Ensembl"/>
</dbReference>
<dbReference type="GO" id="GO:0032991">
    <property type="term" value="C:protein-containing complex"/>
    <property type="evidence" value="ECO:0007669"/>
    <property type="project" value="Ensembl"/>
</dbReference>
<dbReference type="GO" id="GO:0032587">
    <property type="term" value="C:ruffle membrane"/>
    <property type="evidence" value="ECO:0007669"/>
    <property type="project" value="UniProtKB-SubCell"/>
</dbReference>
<dbReference type="GO" id="GO:0001931">
    <property type="term" value="C:uropod"/>
    <property type="evidence" value="ECO:0000314"/>
    <property type="project" value="MGI"/>
</dbReference>
<dbReference type="GO" id="GO:0051015">
    <property type="term" value="F:actin filament binding"/>
    <property type="evidence" value="ECO:0000250"/>
    <property type="project" value="UniProtKB"/>
</dbReference>
<dbReference type="GO" id="GO:0051117">
    <property type="term" value="F:ATPase binding"/>
    <property type="evidence" value="ECO:0007669"/>
    <property type="project" value="Ensembl"/>
</dbReference>
<dbReference type="GO" id="GO:0050839">
    <property type="term" value="F:cell adhesion molecule binding"/>
    <property type="evidence" value="ECO:0000250"/>
    <property type="project" value="UniProtKB"/>
</dbReference>
<dbReference type="GO" id="GO:0097718">
    <property type="term" value="F:disordered domain specific binding"/>
    <property type="evidence" value="ECO:0000314"/>
    <property type="project" value="CAFA"/>
</dbReference>
<dbReference type="GO" id="GO:0042802">
    <property type="term" value="F:identical protein binding"/>
    <property type="evidence" value="ECO:0007669"/>
    <property type="project" value="Ensembl"/>
</dbReference>
<dbReference type="GO" id="GO:0008017">
    <property type="term" value="F:microtubule binding"/>
    <property type="evidence" value="ECO:0007669"/>
    <property type="project" value="Ensembl"/>
</dbReference>
<dbReference type="GO" id="GO:0034236">
    <property type="term" value="F:protein kinase A catalytic subunit binding"/>
    <property type="evidence" value="ECO:0007669"/>
    <property type="project" value="Ensembl"/>
</dbReference>
<dbReference type="GO" id="GO:0034237">
    <property type="term" value="F:protein kinase A regulatory subunit binding"/>
    <property type="evidence" value="ECO:0007669"/>
    <property type="project" value="Ensembl"/>
</dbReference>
<dbReference type="GO" id="GO:0044548">
    <property type="term" value="F:S100 protein binding"/>
    <property type="evidence" value="ECO:0007669"/>
    <property type="project" value="Ensembl"/>
</dbReference>
<dbReference type="GO" id="GO:0051017">
    <property type="term" value="P:actin filament bundle assembly"/>
    <property type="evidence" value="ECO:0000250"/>
    <property type="project" value="UniProtKB"/>
</dbReference>
<dbReference type="GO" id="GO:0030953">
    <property type="term" value="P:astral microtubule organization"/>
    <property type="evidence" value="ECO:0007669"/>
    <property type="project" value="Ensembl"/>
</dbReference>
<dbReference type="GO" id="GO:0071320">
    <property type="term" value="P:cellular response to cAMP"/>
    <property type="evidence" value="ECO:0007669"/>
    <property type="project" value="Ensembl"/>
</dbReference>
<dbReference type="GO" id="GO:0043622">
    <property type="term" value="P:cortical microtubule organization"/>
    <property type="evidence" value="ECO:0007669"/>
    <property type="project" value="Ensembl"/>
</dbReference>
<dbReference type="GO" id="GO:0051660">
    <property type="term" value="P:establishment of centrosome localization"/>
    <property type="evidence" value="ECO:0007669"/>
    <property type="project" value="Ensembl"/>
</dbReference>
<dbReference type="GO" id="GO:0061028">
    <property type="term" value="P:establishment of endothelial barrier"/>
    <property type="evidence" value="ECO:0007669"/>
    <property type="project" value="Ensembl"/>
</dbReference>
<dbReference type="GO" id="GO:0035088">
    <property type="term" value="P:establishment or maintenance of apical/basal cell polarity"/>
    <property type="evidence" value="ECO:0000315"/>
    <property type="project" value="MGI"/>
</dbReference>
<dbReference type="GO" id="GO:0046847">
    <property type="term" value="P:filopodium assembly"/>
    <property type="evidence" value="ECO:0007669"/>
    <property type="project" value="Ensembl"/>
</dbReference>
<dbReference type="GO" id="GO:0001951">
    <property type="term" value="P:intestinal D-glucose absorption"/>
    <property type="evidence" value="ECO:0000316"/>
    <property type="project" value="UniProtKB"/>
</dbReference>
<dbReference type="GO" id="GO:0007159">
    <property type="term" value="P:leukocyte cell-cell adhesion"/>
    <property type="evidence" value="ECO:0007669"/>
    <property type="project" value="Ensembl"/>
</dbReference>
<dbReference type="GO" id="GO:0022614">
    <property type="term" value="P:membrane to membrane docking"/>
    <property type="evidence" value="ECO:0007669"/>
    <property type="project" value="Ensembl"/>
</dbReference>
<dbReference type="GO" id="GO:0070373">
    <property type="term" value="P:negative regulation of ERK1 and ERK2 cascade"/>
    <property type="evidence" value="ECO:0007669"/>
    <property type="project" value="Ensembl"/>
</dbReference>
<dbReference type="GO" id="GO:0032703">
    <property type="term" value="P:negative regulation of interleukin-2 production"/>
    <property type="evidence" value="ECO:0007669"/>
    <property type="project" value="Ensembl"/>
</dbReference>
<dbReference type="GO" id="GO:1903753">
    <property type="term" value="P:negative regulation of p38MAPK cascade"/>
    <property type="evidence" value="ECO:0007669"/>
    <property type="project" value="Ensembl"/>
</dbReference>
<dbReference type="GO" id="GO:0050860">
    <property type="term" value="P:negative regulation of T cell receptor signaling pathway"/>
    <property type="evidence" value="ECO:0007669"/>
    <property type="project" value="Ensembl"/>
</dbReference>
<dbReference type="GO" id="GO:0000122">
    <property type="term" value="P:negative regulation of transcription by RNA polymerase II"/>
    <property type="evidence" value="ECO:0007669"/>
    <property type="project" value="Ensembl"/>
</dbReference>
<dbReference type="GO" id="GO:2000643">
    <property type="term" value="P:positive regulation of early endosome to late endosome transport"/>
    <property type="evidence" value="ECO:0007669"/>
    <property type="project" value="Ensembl"/>
</dbReference>
<dbReference type="GO" id="GO:0010628">
    <property type="term" value="P:positive regulation of gene expression"/>
    <property type="evidence" value="ECO:0007669"/>
    <property type="project" value="Ensembl"/>
</dbReference>
<dbReference type="GO" id="GO:0040018">
    <property type="term" value="P:positive regulation of multicellular organism growth"/>
    <property type="evidence" value="ECO:0000316"/>
    <property type="project" value="UniProtKB"/>
</dbReference>
<dbReference type="GO" id="GO:0045732">
    <property type="term" value="P:positive regulation of protein catabolic process"/>
    <property type="evidence" value="ECO:0007669"/>
    <property type="project" value="Ensembl"/>
</dbReference>
<dbReference type="GO" id="GO:1902966">
    <property type="term" value="P:positive regulation of protein localization to early endosome"/>
    <property type="evidence" value="ECO:0007669"/>
    <property type="project" value="Ensembl"/>
</dbReference>
<dbReference type="GO" id="GO:1903078">
    <property type="term" value="P:positive regulation of protein localization to plasma membrane"/>
    <property type="evidence" value="ECO:0000316"/>
    <property type="project" value="UniProtKB"/>
</dbReference>
<dbReference type="GO" id="GO:0098974">
    <property type="term" value="P:postsynaptic actin cytoskeleton organization"/>
    <property type="evidence" value="ECO:0000314"/>
    <property type="project" value="SynGO"/>
</dbReference>
<dbReference type="GO" id="GO:0010737">
    <property type="term" value="P:protein kinase A signaling"/>
    <property type="evidence" value="ECO:0007669"/>
    <property type="project" value="Ensembl"/>
</dbReference>
<dbReference type="GO" id="GO:0072697">
    <property type="term" value="P:protein localization to cell cortex"/>
    <property type="evidence" value="ECO:0007669"/>
    <property type="project" value="Ensembl"/>
</dbReference>
<dbReference type="GO" id="GO:0072659">
    <property type="term" value="P:protein localization to plasma membrane"/>
    <property type="evidence" value="ECO:0007669"/>
    <property type="project" value="Ensembl"/>
</dbReference>
<dbReference type="GO" id="GO:0031503">
    <property type="term" value="P:protein-containing complex localization"/>
    <property type="evidence" value="ECO:0007669"/>
    <property type="project" value="Ensembl"/>
</dbReference>
<dbReference type="GO" id="GO:0031623">
    <property type="term" value="P:receptor internalization"/>
    <property type="evidence" value="ECO:0000315"/>
    <property type="project" value="MGI"/>
</dbReference>
<dbReference type="GO" id="GO:0008360">
    <property type="term" value="P:regulation of cell shape"/>
    <property type="evidence" value="ECO:0007669"/>
    <property type="project" value="UniProtKB-KW"/>
</dbReference>
<dbReference type="GO" id="GO:0032532">
    <property type="term" value="P:regulation of microvillus length"/>
    <property type="evidence" value="ECO:0000316"/>
    <property type="project" value="UniProtKB"/>
</dbReference>
<dbReference type="GO" id="GO:1902115">
    <property type="term" value="P:regulation of organelle assembly"/>
    <property type="evidence" value="ECO:0007669"/>
    <property type="project" value="Ensembl"/>
</dbReference>
<dbReference type="GO" id="GO:0003376">
    <property type="term" value="P:sphingosine-1-phosphate receptor signaling pathway"/>
    <property type="evidence" value="ECO:0007669"/>
    <property type="project" value="Ensembl"/>
</dbReference>
<dbReference type="GO" id="GO:1902896">
    <property type="term" value="P:terminal web assembly"/>
    <property type="evidence" value="ECO:0000316"/>
    <property type="project" value="UniProtKB"/>
</dbReference>
<dbReference type="CDD" id="cd14473">
    <property type="entry name" value="FERM_B-lobe"/>
    <property type="match status" value="1"/>
</dbReference>
<dbReference type="CDD" id="cd13194">
    <property type="entry name" value="FERM_C_ERM"/>
    <property type="match status" value="1"/>
</dbReference>
<dbReference type="CDD" id="cd17239">
    <property type="entry name" value="FERM_F1_Ezrin"/>
    <property type="match status" value="1"/>
</dbReference>
<dbReference type="FunFam" id="2.30.29.30:FF:000003">
    <property type="entry name" value="Radixin isoform 1"/>
    <property type="match status" value="1"/>
</dbReference>
<dbReference type="FunFam" id="1.20.80.10:FF:000002">
    <property type="entry name" value="radixin isoform X1"/>
    <property type="match status" value="1"/>
</dbReference>
<dbReference type="FunFam" id="3.10.20.90:FF:000013">
    <property type="entry name" value="radixin isoform X1"/>
    <property type="match status" value="1"/>
</dbReference>
<dbReference type="FunFam" id="1.20.5.450:FF:000001">
    <property type="entry name" value="radixin isoform X2"/>
    <property type="match status" value="1"/>
</dbReference>
<dbReference type="Gene3D" id="1.20.5.450">
    <property type="match status" value="1"/>
</dbReference>
<dbReference type="Gene3D" id="1.20.80.10">
    <property type="match status" value="1"/>
</dbReference>
<dbReference type="Gene3D" id="6.10.360.10">
    <property type="match status" value="1"/>
</dbReference>
<dbReference type="Gene3D" id="3.10.20.90">
    <property type="entry name" value="Phosphatidylinositol 3-kinase Catalytic Subunit, Chain A, domain 1"/>
    <property type="match status" value="1"/>
</dbReference>
<dbReference type="Gene3D" id="2.30.29.30">
    <property type="entry name" value="Pleckstrin-homology domain (PH domain)/Phosphotyrosine-binding domain (PTB)"/>
    <property type="match status" value="1"/>
</dbReference>
<dbReference type="InterPro" id="IPR019749">
    <property type="entry name" value="Band_41_domain"/>
</dbReference>
<dbReference type="InterPro" id="IPR011174">
    <property type="entry name" value="ERM"/>
</dbReference>
<dbReference type="InterPro" id="IPR011259">
    <property type="entry name" value="ERM_C_dom"/>
</dbReference>
<dbReference type="InterPro" id="IPR041789">
    <property type="entry name" value="ERM_FERM_C"/>
</dbReference>
<dbReference type="InterPro" id="IPR046810">
    <property type="entry name" value="ERM_helical"/>
</dbReference>
<dbReference type="InterPro" id="IPR000798">
    <property type="entry name" value="Ez/rad/moesin-like"/>
</dbReference>
<dbReference type="InterPro" id="IPR014352">
    <property type="entry name" value="FERM/acyl-CoA-bd_prot_sf"/>
</dbReference>
<dbReference type="InterPro" id="IPR035963">
    <property type="entry name" value="FERM_2"/>
</dbReference>
<dbReference type="InterPro" id="IPR019748">
    <property type="entry name" value="FERM_central"/>
</dbReference>
<dbReference type="InterPro" id="IPR019747">
    <property type="entry name" value="FERM_CS"/>
</dbReference>
<dbReference type="InterPro" id="IPR000299">
    <property type="entry name" value="FERM_domain"/>
</dbReference>
<dbReference type="InterPro" id="IPR018979">
    <property type="entry name" value="FERM_N"/>
</dbReference>
<dbReference type="InterPro" id="IPR018980">
    <property type="entry name" value="FERM_PH-like_C"/>
</dbReference>
<dbReference type="InterPro" id="IPR008954">
    <property type="entry name" value="Moesin_tail_sf"/>
</dbReference>
<dbReference type="InterPro" id="IPR011993">
    <property type="entry name" value="PH-like_dom_sf"/>
</dbReference>
<dbReference type="InterPro" id="IPR029071">
    <property type="entry name" value="Ubiquitin-like_domsf"/>
</dbReference>
<dbReference type="PANTHER" id="PTHR23281">
    <property type="entry name" value="MERLIN/MOESIN/EZRIN/RADIXIN"/>
    <property type="match status" value="1"/>
</dbReference>
<dbReference type="Pfam" id="PF00769">
    <property type="entry name" value="ERM_C"/>
    <property type="match status" value="1"/>
</dbReference>
<dbReference type="Pfam" id="PF20492">
    <property type="entry name" value="ERM_helical"/>
    <property type="match status" value="1"/>
</dbReference>
<dbReference type="Pfam" id="PF09380">
    <property type="entry name" value="FERM_C"/>
    <property type="match status" value="1"/>
</dbReference>
<dbReference type="Pfam" id="PF00373">
    <property type="entry name" value="FERM_M"/>
    <property type="match status" value="1"/>
</dbReference>
<dbReference type="Pfam" id="PF09379">
    <property type="entry name" value="FERM_N"/>
    <property type="match status" value="1"/>
</dbReference>
<dbReference type="PIRSF" id="PIRSF002305">
    <property type="entry name" value="ERM"/>
    <property type="match status" value="1"/>
</dbReference>
<dbReference type="PRINTS" id="PR00935">
    <property type="entry name" value="BAND41"/>
</dbReference>
<dbReference type="PRINTS" id="PR00661">
    <property type="entry name" value="ERMFAMILY"/>
</dbReference>
<dbReference type="SMART" id="SM00295">
    <property type="entry name" value="B41"/>
    <property type="match status" value="1"/>
</dbReference>
<dbReference type="SMART" id="SM01196">
    <property type="entry name" value="FERM_C"/>
    <property type="match status" value="1"/>
</dbReference>
<dbReference type="SUPFAM" id="SSF48678">
    <property type="entry name" value="Moesin tail domain"/>
    <property type="match status" value="1"/>
</dbReference>
<dbReference type="SUPFAM" id="SSF50729">
    <property type="entry name" value="PH domain-like"/>
    <property type="match status" value="1"/>
</dbReference>
<dbReference type="SUPFAM" id="SSF47031">
    <property type="entry name" value="Second domain of FERM"/>
    <property type="match status" value="1"/>
</dbReference>
<dbReference type="SUPFAM" id="SSF54236">
    <property type="entry name" value="Ubiquitin-like"/>
    <property type="match status" value="1"/>
</dbReference>
<dbReference type="PROSITE" id="PS00660">
    <property type="entry name" value="FERM_1"/>
    <property type="match status" value="1"/>
</dbReference>
<dbReference type="PROSITE" id="PS00661">
    <property type="entry name" value="FERM_2"/>
    <property type="match status" value="1"/>
</dbReference>
<dbReference type="PROSITE" id="PS50057">
    <property type="entry name" value="FERM_3"/>
    <property type="match status" value="1"/>
</dbReference>
<accession>P26040</accession>
<accession>Q80ZT8</accession>
<accession>Q9DCI1</accession>
<feature type="chain" id="PRO_0000219409" description="Ezrin">
    <location>
        <begin position="1"/>
        <end position="586"/>
    </location>
</feature>
<feature type="domain" description="FERM" evidence="7">
    <location>
        <begin position="2"/>
        <end position="295"/>
    </location>
</feature>
<feature type="region of interest" description="Interaction with SCYL3" evidence="1">
    <location>
        <begin position="244"/>
        <end position="586"/>
    </location>
</feature>
<feature type="region of interest" description="Disordered" evidence="8">
    <location>
        <begin position="306"/>
        <end position="338"/>
    </location>
</feature>
<feature type="region of interest" description="Disordered" evidence="8">
    <location>
        <begin position="534"/>
        <end position="565"/>
    </location>
</feature>
<feature type="coiled-coil region" evidence="6">
    <location>
        <begin position="302"/>
        <end position="462"/>
    </location>
</feature>
<feature type="short sequence motif" description="[IL]-x-C-x-x-[DE] motif" evidence="2">
    <location>
        <begin position="115"/>
        <end position="120"/>
    </location>
</feature>
<feature type="compositionally biased region" description="Basic and acidic residues" evidence="8">
    <location>
        <begin position="308"/>
        <end position="338"/>
    </location>
</feature>
<feature type="compositionally biased region" description="Basic and acidic residues" evidence="8">
    <location>
        <begin position="540"/>
        <end position="565"/>
    </location>
</feature>
<feature type="modified residue" description="N6-acetyllysine" evidence="2">
    <location>
        <position position="60"/>
    </location>
</feature>
<feature type="modified residue" description="Phosphotyrosine; by PDGFR" evidence="2">
    <location>
        <position position="146"/>
    </location>
</feature>
<feature type="modified residue" description="Phosphotyrosine; by PDGFR" evidence="2">
    <location>
        <position position="354"/>
    </location>
</feature>
<feature type="modified residue" description="Phosphoserine" evidence="2">
    <location>
        <position position="366"/>
    </location>
</feature>
<feature type="modified residue" description="Phosphotyrosine" evidence="2">
    <location>
        <position position="478"/>
    </location>
</feature>
<feature type="modified residue" description="Phosphoserine" evidence="17">
    <location>
        <position position="535"/>
    </location>
</feature>
<feature type="modified residue" description="Phosphothreonine; by ROCK2 and PKC/PRKCI" evidence="16">
    <location>
        <position position="567"/>
    </location>
</feature>
<feature type="sequence conflict" description="In Ref. 1; CAA43086." evidence="15" ref="1">
    <original>Q</original>
    <variation>P</variation>
    <location>
        <position position="48"/>
    </location>
</feature>
<feature type="sequence conflict" description="In Ref. 1; CAA43086." evidence="15" ref="1">
    <original>T</original>
    <variation>A</variation>
    <location>
        <position position="325"/>
    </location>
</feature>
<feature type="sequence conflict" description="In Ref. 2; BAB22341." evidence="15" ref="2">
    <original>Q</original>
    <variation>R</variation>
    <location>
        <position position="570"/>
    </location>
</feature>
<comment type="function">
    <text evidence="1">Probably involved in connections of major cytoskeletal structures to the plasma membrane. In epithelial cells, required for the formation of microvilli and membrane ruffles on the apical pole. Along with PLEKHG6, required for normal macropinocytosis (By similarity).</text>
</comment>
<comment type="activity regulation">
    <text evidence="13">A head-to-tail association, of the N-terminal and C-terminal halves results in a closed conformation (inactive form) which is incapable of actin or membrane-binding.</text>
</comment>
<comment type="subunit">
    <text evidence="2 3 4 5 10 11 12 14">Interacts with PALS1 and NHERF2. Found in a complex with EZR, PODXL and NHERF2 (By similarity). Interacts with MCC, PLEKHG6, PODXL, SCYL3/PACE1, NHERF1 and TMEM8B. Interacts (when phosphorylated) with FES/FPS. Interacts with dimeric S100P, the interaction may be activating through unmasking of F-actin binding sites (By similarity). Identified in complexes that contain VIM, EZR, AHNAK, BFSP1, BFSP2, ANK2, PLEC, PRX and spectrin (PubMed:21745462). Detected in a complex composed of at least EZR, AHNAK, PPL and PRX (By similarity). Interacts with PDPN (via cytoplasmic domain); activates RHOA and promotes epithelial-mesenchymal transition (By similarity). Interacts with SPN/CD43 cytoplasmic tail (PubMed:21289089, PubMed:9472040). Interacts with CD44 and ICAM2 (PubMed:9472040). Interacts with SLC9A3; interaction targets SLC9A3 to the apical membrane (By similarity). Interacts with SLC9A1; regulates interactions of SLC9A1 with cytoskeletal and promotes stress fiber formation (By similarity). Interacts with CLIC5; may work together in a complex which also includes RDX and MYO6 to stabilize linkages between the plasma membrane and subjacent actin cytoskeleton at the base of stereocilia (PubMed:24285636).</text>
</comment>
<comment type="subcellular location">
    <subcellularLocation>
        <location evidence="2">Apical cell membrane</location>
        <topology evidence="2">Peripheral membrane protein</topology>
        <orientation evidence="2">Cytoplasmic side</orientation>
    </subcellularLocation>
    <subcellularLocation>
        <location evidence="2">Cell projection</location>
    </subcellularLocation>
    <subcellularLocation>
        <location evidence="2">Cell projection</location>
        <location evidence="2">Microvillus membrane</location>
        <topology evidence="2">Peripheral membrane protein</topology>
        <orientation evidence="2">Cytoplasmic side</orientation>
    </subcellularLocation>
    <subcellularLocation>
        <location evidence="2">Cell projection</location>
        <location evidence="2">Ruffle membrane</location>
        <topology evidence="2">Peripheral membrane protein</topology>
        <orientation evidence="2">Cytoplasmic side</orientation>
    </subcellularLocation>
    <subcellularLocation>
        <location evidence="2">Cytoplasm</location>
        <location evidence="2">Cell cortex</location>
    </subcellularLocation>
    <subcellularLocation>
        <location evidence="2">Cytoplasm</location>
        <location evidence="2">Cytoskeleton</location>
    </subcellularLocation>
    <subcellularLocation>
        <location evidence="14">Cell projection</location>
        <location evidence="14">Microvillus</location>
    </subcellularLocation>
    <text evidence="2 4">Localization to the apical membrane of parietal cells depends on the interaction with PALS1. Microvillar peripheral membrane protein (cytoplasmic side). Localizes to cell extensions and peripheral processes of astrocytes (By similarity).</text>
</comment>
<comment type="tissue specificity">
    <text evidence="9 11">Detected in eye lens fiber cells (PubMed:21745462). Expressed in cerebrum and cerebellum (at protein level) (PubMed:15797715). Component of the microvilli of intestinal epithelial cells.</text>
</comment>
<comment type="developmental stage">
    <text evidence="9">Detected in whole embryo from 5 dpc with highest expression at 8, 11, 12, and 18 dpc. Expressed at 18 dpc in brain, a clear reduction occurs after birth followed by a transient increase around 2 weeks to 1 month. Hardly detected in adult brain.</text>
</comment>
<comment type="domain">
    <text evidence="2">Has three main structural domains: an N-terminal FERM domain, a central alpha-helical domain and a C-terminal actin-binding domain.</text>
</comment>
<comment type="domain">
    <text evidence="2">The FERM domain is organized in a clover-shaped structure that comprises three subdomains identified as F1 (residues 2-82), F2 (residues 96-198), and F3 (residues 204-296). In the active form, the subdomain F3 adopts two mutually exclusive conformational isomers where a row of four phenylalanine side chains (Phe250, Phe255, Phe267 and Phe269) must point in the same direction. In the autoinhibited form, the F3 subdomain interacts with the C-terminal domain (residues 516-586) and stabilizes the structure, selecting only one possible arrangement of phenylalanine side chains. The FERM domain mediates binding to membrane lipids and signaling molecules.</text>
</comment>
<comment type="domain">
    <text evidence="2">The central alpha-helical domain is composed of two alpha helices (residues 326-406 and 417-466) connected by a linker. It protrudes from the FERM domain forming a coiled coil structure where the linker can have either a loop or a helix conformation. The monomer is predicted to form an intra-molecular helix-loop-helix coiled coil structure. Whereas the dimer adopts an elongated dumbbell-shaped configuration where continuous alpha helices from each protomer are organized in a antiparallel coiled coil structure that connect FERM:C-terminal domain swapped complex at each end. The dimer is predicted to link actin filaments parallel to the plasma membrane.</text>
</comment>
<comment type="domain">
    <text evidence="2">The [IL]-x-C-x-x-[DE] motif is a proposed target motif for cysteine S-nitrosylation mediated by the iNOS-S100A8/A9 transnitrosylase complex.</text>
</comment>
<comment type="PTM">
    <text evidence="13">Phosphorylated by tyrosine-protein kinases. Phosphorylation by ROCK2 suppresses the head-to-tail association of the N-terminal and C-terminal halves resulting in an opened conformation which is capable of actin and membrane-binding.</text>
</comment>
<comment type="PTM">
    <text evidence="2">S-nitrosylation is induced by interferon-gamma and oxidatively-modified low-densitity lipoprotein (LDL(ox)) possibly implicating the iNOS-S100A8/9 transnitrosylase complex.</text>
</comment>
<proteinExistence type="evidence at protein level"/>